<accession>P0AAB6</accession>
<accession>P71245</accession>
<accession>P78083</accession>
<accession>P97192</accession>
<gene>
    <name type="primary">galF</name>
    <name type="synonym">wcaN</name>
    <name type="ordered locus">b2042</name>
    <name type="ordered locus">JW2027</name>
</gene>
<sequence length="297" mass="32829">MTNLKAVIPVAGLGMHMLPATKAIPKEMLPIVDKPMIQYIVDEIVAAGIKEILLVTHASKNAVENHFDTSYELESLLEQRVKRQLLAEVQSICPPGVTIMNVRQGEPLGLGHSILCARPAIGDNPFVVVLPDVVIDDASADPLRYNLAAMIARFNETGRSQVLAKRMPGDLSEYSVIQTKEPLDREGKVSRIVEFIEKPDQPQTLDSDIMAVGRYVLSADIWPELERTQPGAWGRIQLTDAIAELAKKQSVDAMLMTGDSYDCGKKMGYMQAFVKYGLRNLKEGAKFRKGIEKLLSE</sequence>
<organism>
    <name type="scientific">Escherichia coli (strain K12)</name>
    <dbReference type="NCBI Taxonomy" id="83333"/>
    <lineage>
        <taxon>Bacteria</taxon>
        <taxon>Pseudomonadati</taxon>
        <taxon>Pseudomonadota</taxon>
        <taxon>Gammaproteobacteria</taxon>
        <taxon>Enterobacterales</taxon>
        <taxon>Enterobacteriaceae</taxon>
        <taxon>Escherichia</taxon>
    </lineage>
</organism>
<dbReference type="EC" id="2.7.7.9"/>
<dbReference type="EMBL" id="U38473">
    <property type="protein sequence ID" value="AAC77853.1"/>
    <property type="molecule type" value="Genomic_DNA"/>
</dbReference>
<dbReference type="EMBL" id="U00096">
    <property type="protein sequence ID" value="AAC75103.1"/>
    <property type="molecule type" value="Genomic_DNA"/>
</dbReference>
<dbReference type="EMBL" id="AP009048">
    <property type="protein sequence ID" value="BAA15896.1"/>
    <property type="molecule type" value="Genomic_DNA"/>
</dbReference>
<dbReference type="PIR" id="A64970">
    <property type="entry name" value="A64970"/>
</dbReference>
<dbReference type="RefSeq" id="NP_416546.1">
    <property type="nucleotide sequence ID" value="NC_000913.3"/>
</dbReference>
<dbReference type="RefSeq" id="WP_000183060.1">
    <property type="nucleotide sequence ID" value="NZ_STEB01000002.1"/>
</dbReference>
<dbReference type="SMR" id="P0AAB6"/>
<dbReference type="BioGRID" id="4259678">
    <property type="interactions" value="197"/>
</dbReference>
<dbReference type="BioGRID" id="850907">
    <property type="interactions" value="1"/>
</dbReference>
<dbReference type="DIP" id="DIP-35871N"/>
<dbReference type="FunCoup" id="P0AAB6">
    <property type="interactions" value="642"/>
</dbReference>
<dbReference type="IntAct" id="P0AAB6">
    <property type="interactions" value="17"/>
</dbReference>
<dbReference type="STRING" id="511145.b2042"/>
<dbReference type="jPOST" id="P0AAB6"/>
<dbReference type="PaxDb" id="511145-b2042"/>
<dbReference type="EnsemblBacteria" id="AAC75103">
    <property type="protein sequence ID" value="AAC75103"/>
    <property type="gene ID" value="b2042"/>
</dbReference>
<dbReference type="GeneID" id="86946998"/>
<dbReference type="GeneID" id="946560"/>
<dbReference type="KEGG" id="ecj:JW2027"/>
<dbReference type="KEGG" id="eco:b2042"/>
<dbReference type="KEGG" id="ecoc:C3026_11500"/>
<dbReference type="PATRIC" id="fig|511145.12.peg.2119"/>
<dbReference type="EchoBASE" id="EB3348"/>
<dbReference type="eggNOG" id="COG1210">
    <property type="taxonomic scope" value="Bacteria"/>
</dbReference>
<dbReference type="HOGENOM" id="CLU_029499_1_1_6"/>
<dbReference type="InParanoid" id="P0AAB6"/>
<dbReference type="OMA" id="MHYVRQG"/>
<dbReference type="OrthoDB" id="9803306at2"/>
<dbReference type="PhylomeDB" id="P0AAB6"/>
<dbReference type="BioCyc" id="EcoCyc:G7093-MONOMER"/>
<dbReference type="SABIO-RK" id="P0AAB6"/>
<dbReference type="UniPathway" id="UPA00030"/>
<dbReference type="UniPathway" id="UPA00215"/>
<dbReference type="PRO" id="PR:P0AAB6"/>
<dbReference type="Proteomes" id="UP000000625">
    <property type="component" value="Chromosome"/>
</dbReference>
<dbReference type="GO" id="GO:0005829">
    <property type="term" value="C:cytosol"/>
    <property type="evidence" value="ECO:0000314"/>
    <property type="project" value="EcoCyc"/>
</dbReference>
<dbReference type="GO" id="GO:0030234">
    <property type="term" value="F:enzyme regulator activity"/>
    <property type="evidence" value="ECO:0007669"/>
    <property type="project" value="InterPro"/>
</dbReference>
<dbReference type="GO" id="GO:0003983">
    <property type="term" value="F:UTP:glucose-1-phosphate uridylyltransferase activity"/>
    <property type="evidence" value="ECO:0000314"/>
    <property type="project" value="EcoCyc"/>
</dbReference>
<dbReference type="GO" id="GO:0009103">
    <property type="term" value="P:lipopolysaccharide biosynthetic process"/>
    <property type="evidence" value="ECO:0007669"/>
    <property type="project" value="UniProtKB-UniPathway"/>
</dbReference>
<dbReference type="GO" id="GO:0006011">
    <property type="term" value="P:UDP-alpha-D-glucose metabolic process"/>
    <property type="evidence" value="ECO:0007669"/>
    <property type="project" value="InterPro"/>
</dbReference>
<dbReference type="CDD" id="cd02541">
    <property type="entry name" value="UGPase_prokaryotic"/>
    <property type="match status" value="1"/>
</dbReference>
<dbReference type="FunFam" id="3.90.550.10:FF:000008">
    <property type="entry name" value="UTP--glucose-1-phosphate uridylyltransferase"/>
    <property type="match status" value="1"/>
</dbReference>
<dbReference type="Gene3D" id="3.90.550.10">
    <property type="entry name" value="Spore Coat Polysaccharide Biosynthesis Protein SpsA, Chain A"/>
    <property type="match status" value="1"/>
</dbReference>
<dbReference type="InterPro" id="IPR005774">
    <property type="entry name" value="GalF"/>
</dbReference>
<dbReference type="InterPro" id="IPR005771">
    <property type="entry name" value="GalU_uridylyltTrfase_bac/arc"/>
</dbReference>
<dbReference type="InterPro" id="IPR005835">
    <property type="entry name" value="NTP_transferase_dom"/>
</dbReference>
<dbReference type="InterPro" id="IPR029044">
    <property type="entry name" value="Nucleotide-diphossugar_trans"/>
</dbReference>
<dbReference type="NCBIfam" id="TIGR01105">
    <property type="entry name" value="galF"/>
    <property type="match status" value="1"/>
</dbReference>
<dbReference type="NCBIfam" id="NF007516">
    <property type="entry name" value="PRK10122.1"/>
    <property type="match status" value="1"/>
</dbReference>
<dbReference type="PANTHER" id="PTHR43197">
    <property type="entry name" value="UTP--GLUCOSE-1-PHOSPHATE URIDYLYLTRANSFERASE"/>
    <property type="match status" value="1"/>
</dbReference>
<dbReference type="PANTHER" id="PTHR43197:SF2">
    <property type="entry name" value="UTP--GLUCOSE-1-PHOSPHATE URIDYLYLTRANSFERASE"/>
    <property type="match status" value="1"/>
</dbReference>
<dbReference type="Pfam" id="PF00483">
    <property type="entry name" value="NTP_transferase"/>
    <property type="match status" value="1"/>
</dbReference>
<dbReference type="SUPFAM" id="SSF53448">
    <property type="entry name" value="Nucleotide-diphospho-sugar transferases"/>
    <property type="match status" value="1"/>
</dbReference>
<comment type="catalytic activity">
    <reaction>
        <text>alpha-D-glucose 1-phosphate + UTP + H(+) = UDP-alpha-D-glucose + diphosphate</text>
        <dbReference type="Rhea" id="RHEA:19889"/>
        <dbReference type="ChEBI" id="CHEBI:15378"/>
        <dbReference type="ChEBI" id="CHEBI:33019"/>
        <dbReference type="ChEBI" id="CHEBI:46398"/>
        <dbReference type="ChEBI" id="CHEBI:58601"/>
        <dbReference type="ChEBI" id="CHEBI:58885"/>
        <dbReference type="EC" id="2.7.7.9"/>
    </reaction>
</comment>
<comment type="pathway">
    <text>Carbohydrate metabolism; nucleotide-sugar metabolism.</text>
</comment>
<comment type="pathway">
    <text>Bacterial outer membrane biogenesis; lipopolysaccharide biosynthesis.</text>
</comment>
<comment type="similarity">
    <text evidence="1">Belongs to the UDPGP type 2 family.</text>
</comment>
<evidence type="ECO:0000305" key="1"/>
<name>GALF_ECOLI</name>
<protein>
    <recommendedName>
        <fullName>UTP--glucose-1-phosphate uridylyltransferase</fullName>
        <ecNumber>2.7.7.9</ecNumber>
    </recommendedName>
    <alternativeName>
        <fullName>Alpha-D-glucosyl-1-phosphate uridylyltransferase</fullName>
    </alternativeName>
    <alternativeName>
        <fullName>UDP-glucose pyrophosphorylase</fullName>
        <shortName>UDPGP</shortName>
    </alternativeName>
    <alternativeName>
        <fullName>Uridine diphosphoglucose pyrophosphorylase</fullName>
    </alternativeName>
</protein>
<proteinExistence type="evidence at protein level"/>
<keyword id="KW-0448">Lipopolysaccharide biosynthesis</keyword>
<keyword id="KW-0548">Nucleotidyltransferase</keyword>
<keyword id="KW-1185">Reference proteome</keyword>
<keyword id="KW-0808">Transferase</keyword>
<reference key="1">
    <citation type="journal article" date="1996" name="DNA Res.">
        <title>A 460-kb DNA sequence of the Escherichia coli K-12 genome corresponding to the 40.1-50.0 min region on the linkage map.</title>
        <authorList>
            <person name="Itoh T."/>
            <person name="Aiba H."/>
            <person name="Baba T."/>
            <person name="Fujita K."/>
            <person name="Hayashi K."/>
            <person name="Inada T."/>
            <person name="Isono K."/>
            <person name="Kasai H."/>
            <person name="Kimura S."/>
            <person name="Kitakawa M."/>
            <person name="Kitagawa M."/>
            <person name="Makino K."/>
            <person name="Miki T."/>
            <person name="Mizobuchi K."/>
            <person name="Mori H."/>
            <person name="Mori T."/>
            <person name="Motomura K."/>
            <person name="Nakade S."/>
            <person name="Nakamura Y."/>
            <person name="Nashimoto H."/>
            <person name="Nishio Y."/>
            <person name="Oshima T."/>
            <person name="Saito N."/>
            <person name="Sampei G."/>
            <person name="Seki Y."/>
            <person name="Sivasundaram S."/>
            <person name="Tagami H."/>
            <person name="Takeda J."/>
            <person name="Takemoto K."/>
            <person name="Wada C."/>
            <person name="Yamamoto Y."/>
            <person name="Horiuchi T."/>
        </authorList>
    </citation>
    <scope>NUCLEOTIDE SEQUENCE [LARGE SCALE GENOMIC DNA]</scope>
    <source>
        <strain>K12 / W3110 / ATCC 27325 / DSM 5911</strain>
    </source>
</reference>
<reference key="2">
    <citation type="journal article" date="1997" name="Science">
        <title>The complete genome sequence of Escherichia coli K-12.</title>
        <authorList>
            <person name="Blattner F.R."/>
            <person name="Plunkett G. III"/>
            <person name="Bloch C.A."/>
            <person name="Perna N.T."/>
            <person name="Burland V."/>
            <person name="Riley M."/>
            <person name="Collado-Vides J."/>
            <person name="Glasner J.D."/>
            <person name="Rode C.K."/>
            <person name="Mayhew G.F."/>
            <person name="Gregor J."/>
            <person name="Davis N.W."/>
            <person name="Kirkpatrick H.A."/>
            <person name="Goeden M.A."/>
            <person name="Rose D.J."/>
            <person name="Mau B."/>
            <person name="Shao Y."/>
        </authorList>
    </citation>
    <scope>NUCLEOTIDE SEQUENCE [LARGE SCALE GENOMIC DNA]</scope>
    <source>
        <strain>K12 / MG1655 / ATCC 47076</strain>
    </source>
</reference>
<reference key="3">
    <citation type="journal article" date="2006" name="Mol. Syst. Biol.">
        <title>Highly accurate genome sequences of Escherichia coli K-12 strains MG1655 and W3110.</title>
        <authorList>
            <person name="Hayashi K."/>
            <person name="Morooka N."/>
            <person name="Yamamoto Y."/>
            <person name="Fujita K."/>
            <person name="Isono K."/>
            <person name="Choi S."/>
            <person name="Ohtsubo E."/>
            <person name="Baba T."/>
            <person name="Wanner B.L."/>
            <person name="Mori H."/>
            <person name="Horiuchi T."/>
        </authorList>
    </citation>
    <scope>NUCLEOTIDE SEQUENCE [LARGE SCALE GENOMIC DNA]</scope>
    <source>
        <strain>K12 / W3110 / ATCC 27325 / DSM 5911</strain>
    </source>
</reference>
<reference key="4">
    <citation type="journal article" date="1996" name="Mol. Microbiol.">
        <title>The GalF protein of Escherichia coli is not a UDP-glucose pyrophosphorylase but interacts with the GalU protein possibly to regulate cellular levels of UDP-glucose.</title>
        <authorList>
            <person name="Marolda C.L."/>
            <person name="Valvano M.A."/>
        </authorList>
    </citation>
    <scope>CHARACTERIZATION</scope>
</reference>
<feature type="chain" id="PRO_0000201349" description="UTP--glucose-1-phosphate uridylyltransferase">
    <location>
        <begin position="1"/>
        <end position="297"/>
    </location>
</feature>